<dbReference type="EC" id="2.8.1.-" evidence="1"/>
<dbReference type="EMBL" id="AE016828">
    <property type="protein sequence ID" value="AAO90581.1"/>
    <property type="molecule type" value="Genomic_DNA"/>
</dbReference>
<dbReference type="RefSeq" id="NP_820067.1">
    <property type="nucleotide sequence ID" value="NC_002971.4"/>
</dbReference>
<dbReference type="RefSeq" id="WP_010957984.1">
    <property type="nucleotide sequence ID" value="NC_002971.4"/>
</dbReference>
<dbReference type="SMR" id="Q83CP2"/>
<dbReference type="STRING" id="227377.CBU_1067"/>
<dbReference type="EnsemblBacteria" id="AAO90581">
    <property type="protein sequence ID" value="AAO90581"/>
    <property type="gene ID" value="CBU_1067"/>
</dbReference>
<dbReference type="GeneID" id="1208968"/>
<dbReference type="KEGG" id="cbu:CBU_1067"/>
<dbReference type="PATRIC" id="fig|227377.7.peg.1058"/>
<dbReference type="eggNOG" id="COG0037">
    <property type="taxonomic scope" value="Bacteria"/>
</dbReference>
<dbReference type="HOGENOM" id="CLU_026481_0_0_6"/>
<dbReference type="OrthoDB" id="9801054at2"/>
<dbReference type="Proteomes" id="UP000002671">
    <property type="component" value="Chromosome"/>
</dbReference>
<dbReference type="GO" id="GO:0005829">
    <property type="term" value="C:cytosol"/>
    <property type="evidence" value="ECO:0000318"/>
    <property type="project" value="GO_Central"/>
</dbReference>
<dbReference type="GO" id="GO:0051539">
    <property type="term" value="F:4 iron, 4 sulfur cluster binding"/>
    <property type="evidence" value="ECO:0007669"/>
    <property type="project" value="UniProtKB-UniRule"/>
</dbReference>
<dbReference type="GO" id="GO:0005524">
    <property type="term" value="F:ATP binding"/>
    <property type="evidence" value="ECO:0007669"/>
    <property type="project" value="UniProtKB-UniRule"/>
</dbReference>
<dbReference type="GO" id="GO:0000287">
    <property type="term" value="F:magnesium ion binding"/>
    <property type="evidence" value="ECO:0007669"/>
    <property type="project" value="UniProtKB-UniRule"/>
</dbReference>
<dbReference type="GO" id="GO:0016783">
    <property type="term" value="F:sulfurtransferase activity"/>
    <property type="evidence" value="ECO:0000318"/>
    <property type="project" value="GO_Central"/>
</dbReference>
<dbReference type="GO" id="GO:0000049">
    <property type="term" value="F:tRNA binding"/>
    <property type="evidence" value="ECO:0007669"/>
    <property type="project" value="UniProtKB-KW"/>
</dbReference>
<dbReference type="GO" id="GO:0034227">
    <property type="term" value="P:tRNA thio-modification"/>
    <property type="evidence" value="ECO:0000318"/>
    <property type="project" value="GO_Central"/>
</dbReference>
<dbReference type="CDD" id="cd24138">
    <property type="entry name" value="TtcA-like"/>
    <property type="match status" value="1"/>
</dbReference>
<dbReference type="Gene3D" id="3.40.50.620">
    <property type="entry name" value="HUPs"/>
    <property type="match status" value="1"/>
</dbReference>
<dbReference type="HAMAP" id="MF_01850">
    <property type="entry name" value="TtcA"/>
    <property type="match status" value="1"/>
</dbReference>
<dbReference type="InterPro" id="IPR014729">
    <property type="entry name" value="Rossmann-like_a/b/a_fold"/>
</dbReference>
<dbReference type="InterPro" id="IPR011063">
    <property type="entry name" value="TilS/TtcA_N"/>
</dbReference>
<dbReference type="InterPro" id="IPR012089">
    <property type="entry name" value="tRNA_Cyd_32_2_STrfase"/>
</dbReference>
<dbReference type="InterPro" id="IPR035107">
    <property type="entry name" value="tRNA_thiolation_TtcA_Ctu1"/>
</dbReference>
<dbReference type="NCBIfam" id="NF007972">
    <property type="entry name" value="PRK10696.1"/>
    <property type="match status" value="1"/>
</dbReference>
<dbReference type="PANTHER" id="PTHR43686:SF1">
    <property type="entry name" value="AMINOTRAN_5 DOMAIN-CONTAINING PROTEIN"/>
    <property type="match status" value="1"/>
</dbReference>
<dbReference type="PANTHER" id="PTHR43686">
    <property type="entry name" value="SULFURTRANSFERASE-RELATED"/>
    <property type="match status" value="1"/>
</dbReference>
<dbReference type="Pfam" id="PF01171">
    <property type="entry name" value="ATP_bind_3"/>
    <property type="match status" value="1"/>
</dbReference>
<dbReference type="PIRSF" id="PIRSF004976">
    <property type="entry name" value="ATPase_YdaO"/>
    <property type="match status" value="1"/>
</dbReference>
<dbReference type="SUPFAM" id="SSF52402">
    <property type="entry name" value="Adenine nucleotide alpha hydrolases-like"/>
    <property type="match status" value="1"/>
</dbReference>
<organism>
    <name type="scientific">Coxiella burnetii (strain RSA 493 / Nine Mile phase I)</name>
    <dbReference type="NCBI Taxonomy" id="227377"/>
    <lineage>
        <taxon>Bacteria</taxon>
        <taxon>Pseudomonadati</taxon>
        <taxon>Pseudomonadota</taxon>
        <taxon>Gammaproteobacteria</taxon>
        <taxon>Legionellales</taxon>
        <taxon>Coxiellaceae</taxon>
        <taxon>Coxiella</taxon>
    </lineage>
</organism>
<comment type="function">
    <text evidence="1">Catalyzes the ATP-dependent 2-thiolation of cytidine in position 32 of tRNA, to form 2-thiocytidine (s(2)C32). The sulfur atoms are provided by the cysteine/cysteine desulfurase (IscS) system.</text>
</comment>
<comment type="catalytic activity">
    <reaction evidence="1">
        <text>cytidine(32) in tRNA + S-sulfanyl-L-cysteinyl-[cysteine desulfurase] + AH2 + ATP = 2-thiocytidine(32) in tRNA + L-cysteinyl-[cysteine desulfurase] + A + AMP + diphosphate + H(+)</text>
        <dbReference type="Rhea" id="RHEA:57048"/>
        <dbReference type="Rhea" id="RHEA-COMP:10288"/>
        <dbReference type="Rhea" id="RHEA-COMP:12157"/>
        <dbReference type="Rhea" id="RHEA-COMP:12158"/>
        <dbReference type="Rhea" id="RHEA-COMP:14821"/>
        <dbReference type="ChEBI" id="CHEBI:13193"/>
        <dbReference type="ChEBI" id="CHEBI:15378"/>
        <dbReference type="ChEBI" id="CHEBI:17499"/>
        <dbReference type="ChEBI" id="CHEBI:29950"/>
        <dbReference type="ChEBI" id="CHEBI:30616"/>
        <dbReference type="ChEBI" id="CHEBI:33019"/>
        <dbReference type="ChEBI" id="CHEBI:61963"/>
        <dbReference type="ChEBI" id="CHEBI:82748"/>
        <dbReference type="ChEBI" id="CHEBI:141453"/>
        <dbReference type="ChEBI" id="CHEBI:456215"/>
    </reaction>
    <physiologicalReaction direction="left-to-right" evidence="1">
        <dbReference type="Rhea" id="RHEA:57049"/>
    </physiologicalReaction>
</comment>
<comment type="cofactor">
    <cofactor evidence="1">
        <name>Mg(2+)</name>
        <dbReference type="ChEBI" id="CHEBI:18420"/>
    </cofactor>
</comment>
<comment type="cofactor">
    <cofactor evidence="1">
        <name>[4Fe-4S] cluster</name>
        <dbReference type="ChEBI" id="CHEBI:49883"/>
    </cofactor>
    <text evidence="1">Binds 1 [4Fe-4S] cluster per subunit. The cluster is chelated by three Cys residues, the fourth Fe has a free coordination site that may bind a sulfur atom transferred from the persulfide of IscS.</text>
</comment>
<comment type="pathway">
    <text evidence="1">tRNA modification.</text>
</comment>
<comment type="subunit">
    <text evidence="1">Homodimer.</text>
</comment>
<comment type="subcellular location">
    <subcellularLocation>
        <location evidence="1">Cytoplasm</location>
    </subcellularLocation>
</comment>
<comment type="miscellaneous">
    <text evidence="1">The thiolation reaction likely consists of two steps: a first activation step by ATP to form an adenylated intermediate of the target base of tRNA, and a second nucleophilic substitution step of the sulfur (S) atom supplied by the hydrosulfide attached to the Fe-S cluster.</text>
</comment>
<comment type="similarity">
    <text evidence="1">Belongs to the TtcA family.</text>
</comment>
<name>TTCA_COXBU</name>
<keyword id="KW-0004">4Fe-4S</keyword>
<keyword id="KW-0067">ATP-binding</keyword>
<keyword id="KW-0963">Cytoplasm</keyword>
<keyword id="KW-0408">Iron</keyword>
<keyword id="KW-0411">Iron-sulfur</keyword>
<keyword id="KW-0460">Magnesium</keyword>
<keyword id="KW-0479">Metal-binding</keyword>
<keyword id="KW-0547">Nucleotide-binding</keyword>
<keyword id="KW-1185">Reference proteome</keyword>
<keyword id="KW-0694">RNA-binding</keyword>
<keyword id="KW-0808">Transferase</keyword>
<keyword id="KW-0819">tRNA processing</keyword>
<keyword id="KW-0820">tRNA-binding</keyword>
<proteinExistence type="inferred from homology"/>
<sequence>MSEKRVEKKLIHYVKKALNDYRMINTGDRVMVCLSGGKDSYTLLSLLNSIRIEGNYKFDIFAFVLDQSQPGWDDSALRGWLDDKKIPYEILTRDTYSIVKEKIPAGKTYCSLCSRLRRGIIYRYAEEQGFSKIALGHHRDDLIQTLLMSVFYNGQIRSMPPKLLSDNKRHVLIRPLAYCQERDIIKYAMEQQFPLIPCNLCDSQKNLMRQRVKRLISDLAKENPKVPSNMLRALSNIKPSQLMDHELWNFRELNVD</sequence>
<reference key="1">
    <citation type="journal article" date="2003" name="Proc. Natl. Acad. Sci. U.S.A.">
        <title>Complete genome sequence of the Q-fever pathogen, Coxiella burnetii.</title>
        <authorList>
            <person name="Seshadri R."/>
            <person name="Paulsen I.T."/>
            <person name="Eisen J.A."/>
            <person name="Read T.D."/>
            <person name="Nelson K.E."/>
            <person name="Nelson W.C."/>
            <person name="Ward N.L."/>
            <person name="Tettelin H."/>
            <person name="Davidsen T.M."/>
            <person name="Beanan M.J."/>
            <person name="DeBoy R.T."/>
            <person name="Daugherty S.C."/>
            <person name="Brinkac L.M."/>
            <person name="Madupu R."/>
            <person name="Dodson R.J."/>
            <person name="Khouri H.M."/>
            <person name="Lee K.H."/>
            <person name="Carty H.A."/>
            <person name="Scanlan D."/>
            <person name="Heinzen R.A."/>
            <person name="Thompson H.A."/>
            <person name="Samuel J.E."/>
            <person name="Fraser C.M."/>
            <person name="Heidelberg J.F."/>
        </authorList>
    </citation>
    <scope>NUCLEOTIDE SEQUENCE [LARGE SCALE GENOMIC DNA]</scope>
    <source>
        <strain>RSA 493 / Nine Mile phase I</strain>
    </source>
</reference>
<feature type="chain" id="PRO_0000348703" description="tRNA-cytidine(32) 2-sulfurtransferase">
    <location>
        <begin position="1"/>
        <end position="256"/>
    </location>
</feature>
<feature type="short sequence motif" description="PP-loop motif" evidence="1">
    <location>
        <begin position="35"/>
        <end position="40"/>
    </location>
</feature>
<feature type="binding site" evidence="1">
    <location>
        <position position="110"/>
    </location>
    <ligand>
        <name>[4Fe-4S] cluster</name>
        <dbReference type="ChEBI" id="CHEBI:49883"/>
    </ligand>
</feature>
<feature type="binding site" evidence="1">
    <location>
        <position position="113"/>
    </location>
    <ligand>
        <name>[4Fe-4S] cluster</name>
        <dbReference type="ChEBI" id="CHEBI:49883"/>
    </ligand>
</feature>
<feature type="binding site" evidence="1">
    <location>
        <position position="201"/>
    </location>
    <ligand>
        <name>[4Fe-4S] cluster</name>
        <dbReference type="ChEBI" id="CHEBI:49883"/>
    </ligand>
</feature>
<evidence type="ECO:0000255" key="1">
    <source>
        <dbReference type="HAMAP-Rule" id="MF_01850"/>
    </source>
</evidence>
<gene>
    <name evidence="1" type="primary">ttcA</name>
    <name type="ordered locus">CBU_1067</name>
</gene>
<protein>
    <recommendedName>
        <fullName evidence="1">tRNA-cytidine(32) 2-sulfurtransferase</fullName>
        <ecNumber evidence="1">2.8.1.-</ecNumber>
    </recommendedName>
    <alternativeName>
        <fullName evidence="1">Two-thiocytidine biosynthesis protein A</fullName>
    </alternativeName>
    <alternativeName>
        <fullName evidence="1">tRNA 2-thiocytidine biosynthesis protein TtcA</fullName>
    </alternativeName>
</protein>
<accession>Q83CP2</accession>